<accession>B0SSI6</accession>
<name>RL10_LEPBP</name>
<gene>
    <name evidence="1" type="primary">rplJ</name>
    <name type="ordered locus">LEPBI_I1974</name>
</gene>
<reference key="1">
    <citation type="journal article" date="2008" name="PLoS ONE">
        <title>Genome sequence of the saprophyte Leptospira biflexa provides insights into the evolution of Leptospira and the pathogenesis of leptospirosis.</title>
        <authorList>
            <person name="Picardeau M."/>
            <person name="Bulach D.M."/>
            <person name="Bouchier C."/>
            <person name="Zuerner R.L."/>
            <person name="Zidane N."/>
            <person name="Wilson P.J."/>
            <person name="Creno S."/>
            <person name="Kuczek E.S."/>
            <person name="Bommezzadri S."/>
            <person name="Davis J.C."/>
            <person name="McGrath A."/>
            <person name="Johnson M.J."/>
            <person name="Boursaux-Eude C."/>
            <person name="Seemann T."/>
            <person name="Rouy Z."/>
            <person name="Coppel R.L."/>
            <person name="Rood J.I."/>
            <person name="Lajus A."/>
            <person name="Davies J.K."/>
            <person name="Medigue C."/>
            <person name="Adler B."/>
        </authorList>
    </citation>
    <scope>NUCLEOTIDE SEQUENCE [LARGE SCALE GENOMIC DNA]</scope>
    <source>
        <strain>Patoc 1 / ATCC 23582 / Paris</strain>
    </source>
</reference>
<sequence>MANPSKIEAVTELKTRLEKRPNFILASYSGLTVEDMSNLRAKLRKEGSEMKVIKNNLFLRALKESSEHKNNSIDFGDVYKGPLAAIFSLDALPAVAKVCKDFAKDKKELEIKTGYMDGEVLGKSGVEAIAGLPSKQELLAQVARGINAPATQIASGINQIMASLARAINAVAEKNGN</sequence>
<protein>
    <recommendedName>
        <fullName evidence="1">Large ribosomal subunit protein uL10</fullName>
    </recommendedName>
    <alternativeName>
        <fullName evidence="2">50S ribosomal protein L10</fullName>
    </alternativeName>
</protein>
<feature type="chain" id="PRO_1000120981" description="Large ribosomal subunit protein uL10">
    <location>
        <begin position="1"/>
        <end position="177"/>
    </location>
</feature>
<proteinExistence type="inferred from homology"/>
<keyword id="KW-1185">Reference proteome</keyword>
<keyword id="KW-0687">Ribonucleoprotein</keyword>
<keyword id="KW-0689">Ribosomal protein</keyword>
<keyword id="KW-0694">RNA-binding</keyword>
<keyword id="KW-0699">rRNA-binding</keyword>
<comment type="function">
    <text evidence="1">Forms part of the ribosomal stalk, playing a central role in the interaction of the ribosome with GTP-bound translation factors.</text>
</comment>
<comment type="subunit">
    <text evidence="1">Part of the ribosomal stalk of the 50S ribosomal subunit. The N-terminus interacts with L11 and the large rRNA to form the base of the stalk. The C-terminus forms an elongated spine to which L12 dimers bind in a sequential fashion forming a multimeric L10(L12)X complex.</text>
</comment>
<comment type="similarity">
    <text evidence="1">Belongs to the universal ribosomal protein uL10 family.</text>
</comment>
<organism>
    <name type="scientific">Leptospira biflexa serovar Patoc (strain Patoc 1 / ATCC 23582 / Paris)</name>
    <dbReference type="NCBI Taxonomy" id="456481"/>
    <lineage>
        <taxon>Bacteria</taxon>
        <taxon>Pseudomonadati</taxon>
        <taxon>Spirochaetota</taxon>
        <taxon>Spirochaetia</taxon>
        <taxon>Leptospirales</taxon>
        <taxon>Leptospiraceae</taxon>
        <taxon>Leptospira</taxon>
    </lineage>
</organism>
<evidence type="ECO:0000255" key="1">
    <source>
        <dbReference type="HAMAP-Rule" id="MF_00362"/>
    </source>
</evidence>
<evidence type="ECO:0000305" key="2"/>
<dbReference type="EMBL" id="CP000786">
    <property type="protein sequence ID" value="ABZ98076.1"/>
    <property type="molecule type" value="Genomic_DNA"/>
</dbReference>
<dbReference type="RefSeq" id="WP_012388947.1">
    <property type="nucleotide sequence ID" value="NC_010602.1"/>
</dbReference>
<dbReference type="SMR" id="B0SSI6"/>
<dbReference type="STRING" id="456481.LEPBI_I1974"/>
<dbReference type="GeneID" id="93343086"/>
<dbReference type="KEGG" id="lbi:LEPBI_I1974"/>
<dbReference type="HOGENOM" id="CLU_092227_0_0_12"/>
<dbReference type="OrthoDB" id="9808307at2"/>
<dbReference type="BioCyc" id="LBIF456481:LEPBI_RS09750-MONOMER"/>
<dbReference type="Proteomes" id="UP000001847">
    <property type="component" value="Chromosome I"/>
</dbReference>
<dbReference type="GO" id="GO:1990904">
    <property type="term" value="C:ribonucleoprotein complex"/>
    <property type="evidence" value="ECO:0007669"/>
    <property type="project" value="UniProtKB-KW"/>
</dbReference>
<dbReference type="GO" id="GO:0005840">
    <property type="term" value="C:ribosome"/>
    <property type="evidence" value="ECO:0007669"/>
    <property type="project" value="UniProtKB-KW"/>
</dbReference>
<dbReference type="GO" id="GO:0070180">
    <property type="term" value="F:large ribosomal subunit rRNA binding"/>
    <property type="evidence" value="ECO:0007669"/>
    <property type="project" value="UniProtKB-UniRule"/>
</dbReference>
<dbReference type="GO" id="GO:0006412">
    <property type="term" value="P:translation"/>
    <property type="evidence" value="ECO:0007669"/>
    <property type="project" value="UniProtKB-UniRule"/>
</dbReference>
<dbReference type="CDD" id="cd05797">
    <property type="entry name" value="Ribosomal_L10"/>
    <property type="match status" value="1"/>
</dbReference>
<dbReference type="Gene3D" id="3.30.70.1730">
    <property type="match status" value="1"/>
</dbReference>
<dbReference type="Gene3D" id="6.10.250.290">
    <property type="match status" value="1"/>
</dbReference>
<dbReference type="HAMAP" id="MF_00362">
    <property type="entry name" value="Ribosomal_uL10"/>
    <property type="match status" value="1"/>
</dbReference>
<dbReference type="InterPro" id="IPR001790">
    <property type="entry name" value="Ribosomal_uL10"/>
</dbReference>
<dbReference type="InterPro" id="IPR043141">
    <property type="entry name" value="Ribosomal_uL10-like_sf"/>
</dbReference>
<dbReference type="InterPro" id="IPR022973">
    <property type="entry name" value="Ribosomal_uL10_bac"/>
</dbReference>
<dbReference type="InterPro" id="IPR047865">
    <property type="entry name" value="Ribosomal_uL10_bac_type"/>
</dbReference>
<dbReference type="NCBIfam" id="NF000955">
    <property type="entry name" value="PRK00099.1-1"/>
    <property type="match status" value="1"/>
</dbReference>
<dbReference type="PANTHER" id="PTHR11560">
    <property type="entry name" value="39S RIBOSOMAL PROTEIN L10, MITOCHONDRIAL"/>
    <property type="match status" value="1"/>
</dbReference>
<dbReference type="Pfam" id="PF00466">
    <property type="entry name" value="Ribosomal_L10"/>
    <property type="match status" value="1"/>
</dbReference>
<dbReference type="SUPFAM" id="SSF160369">
    <property type="entry name" value="Ribosomal protein L10-like"/>
    <property type="match status" value="1"/>
</dbReference>